<dbReference type="EMBL" id="CP000554">
    <property type="protein sequence ID" value="ABM78270.1"/>
    <property type="molecule type" value="Genomic_DNA"/>
</dbReference>
<dbReference type="RefSeq" id="WP_011130073.1">
    <property type="nucleotide sequence ID" value="NC_008820.1"/>
</dbReference>
<dbReference type="SMR" id="A2C9W0"/>
<dbReference type="STRING" id="59922.P9303_15261"/>
<dbReference type="KEGG" id="pmf:P9303_15261"/>
<dbReference type="HOGENOM" id="CLU_064548_3_0_3"/>
<dbReference type="BioCyc" id="PMAR59922:G1G80-1324-MONOMER"/>
<dbReference type="Proteomes" id="UP000002274">
    <property type="component" value="Chromosome"/>
</dbReference>
<dbReference type="GO" id="GO:1990904">
    <property type="term" value="C:ribonucleoprotein complex"/>
    <property type="evidence" value="ECO:0007669"/>
    <property type="project" value="UniProtKB-KW"/>
</dbReference>
<dbReference type="GO" id="GO:0005840">
    <property type="term" value="C:ribosome"/>
    <property type="evidence" value="ECO:0007669"/>
    <property type="project" value="UniProtKB-KW"/>
</dbReference>
<dbReference type="GO" id="GO:0003735">
    <property type="term" value="F:structural constituent of ribosome"/>
    <property type="evidence" value="ECO:0007669"/>
    <property type="project" value="InterPro"/>
</dbReference>
<dbReference type="GO" id="GO:0006412">
    <property type="term" value="P:translation"/>
    <property type="evidence" value="ECO:0007669"/>
    <property type="project" value="UniProtKB-UniRule"/>
</dbReference>
<dbReference type="Gene3D" id="2.30.170.40">
    <property type="entry name" value="Ribosomal protein L28/L24"/>
    <property type="match status" value="1"/>
</dbReference>
<dbReference type="HAMAP" id="MF_00373">
    <property type="entry name" value="Ribosomal_bL28"/>
    <property type="match status" value="1"/>
</dbReference>
<dbReference type="InterPro" id="IPR026569">
    <property type="entry name" value="Ribosomal_bL28"/>
</dbReference>
<dbReference type="InterPro" id="IPR034704">
    <property type="entry name" value="Ribosomal_bL28/bL31-like_sf"/>
</dbReference>
<dbReference type="InterPro" id="IPR001383">
    <property type="entry name" value="Ribosomal_bL28_bact-type"/>
</dbReference>
<dbReference type="InterPro" id="IPR037147">
    <property type="entry name" value="Ribosomal_bL28_sf"/>
</dbReference>
<dbReference type="NCBIfam" id="TIGR00009">
    <property type="entry name" value="L28"/>
    <property type="match status" value="1"/>
</dbReference>
<dbReference type="PANTHER" id="PTHR13528">
    <property type="entry name" value="39S RIBOSOMAL PROTEIN L28, MITOCHONDRIAL"/>
    <property type="match status" value="1"/>
</dbReference>
<dbReference type="PANTHER" id="PTHR13528:SF2">
    <property type="entry name" value="LARGE RIBOSOMAL SUBUNIT PROTEIN BL28M"/>
    <property type="match status" value="1"/>
</dbReference>
<dbReference type="Pfam" id="PF00830">
    <property type="entry name" value="Ribosomal_L28"/>
    <property type="match status" value="1"/>
</dbReference>
<dbReference type="SUPFAM" id="SSF143800">
    <property type="entry name" value="L28p-like"/>
    <property type="match status" value="1"/>
</dbReference>
<protein>
    <recommendedName>
        <fullName evidence="1">Large ribosomal subunit protein bL28</fullName>
    </recommendedName>
    <alternativeName>
        <fullName evidence="2">50S ribosomal protein L28</fullName>
    </alternativeName>
</protein>
<evidence type="ECO:0000255" key="1">
    <source>
        <dbReference type="HAMAP-Rule" id="MF_00373"/>
    </source>
</evidence>
<evidence type="ECO:0000305" key="2"/>
<feature type="chain" id="PRO_1000007304" description="Large ribosomal subunit protein bL28">
    <location>
        <begin position="1"/>
        <end position="78"/>
    </location>
</feature>
<organism>
    <name type="scientific">Prochlorococcus marinus (strain MIT 9303)</name>
    <dbReference type="NCBI Taxonomy" id="59922"/>
    <lineage>
        <taxon>Bacteria</taxon>
        <taxon>Bacillati</taxon>
        <taxon>Cyanobacteriota</taxon>
        <taxon>Cyanophyceae</taxon>
        <taxon>Synechococcales</taxon>
        <taxon>Prochlorococcaceae</taxon>
        <taxon>Prochlorococcus</taxon>
    </lineage>
</organism>
<keyword id="KW-0687">Ribonucleoprotein</keyword>
<keyword id="KW-0689">Ribosomal protein</keyword>
<sequence>MSRVCQLTGTRANNGMAVSHSHIRTKKLQQANLQQRRLWWAEGNRWLKLRVSTRALKTIQKKGLGVYAKSLGIDLNKI</sequence>
<reference key="1">
    <citation type="journal article" date="2007" name="PLoS Genet.">
        <title>Patterns and implications of gene gain and loss in the evolution of Prochlorococcus.</title>
        <authorList>
            <person name="Kettler G.C."/>
            <person name="Martiny A.C."/>
            <person name="Huang K."/>
            <person name="Zucker J."/>
            <person name="Coleman M.L."/>
            <person name="Rodrigue S."/>
            <person name="Chen F."/>
            <person name="Lapidus A."/>
            <person name="Ferriera S."/>
            <person name="Johnson J."/>
            <person name="Steglich C."/>
            <person name="Church G.M."/>
            <person name="Richardson P."/>
            <person name="Chisholm S.W."/>
        </authorList>
    </citation>
    <scope>NUCLEOTIDE SEQUENCE [LARGE SCALE GENOMIC DNA]</scope>
    <source>
        <strain>MIT 9303</strain>
    </source>
</reference>
<accession>A2C9W0</accession>
<gene>
    <name evidence="1" type="primary">rpmB</name>
    <name evidence="1" type="synonym">rpl28</name>
    <name type="ordered locus">P9303_15261</name>
</gene>
<comment type="similarity">
    <text evidence="1">Belongs to the bacterial ribosomal protein bL28 family.</text>
</comment>
<name>RL28_PROM3</name>
<proteinExistence type="inferred from homology"/>